<keyword id="KW-0966">Cell projection</keyword>
<keyword id="KW-0969">Cilium</keyword>
<keyword id="KW-0175">Coiled coil</keyword>
<keyword id="KW-0963">Cytoplasm</keyword>
<keyword id="KW-0206">Cytoskeleton</keyword>
<keyword id="KW-0282">Flagellum</keyword>
<keyword id="KW-1185">Reference proteome</keyword>
<comment type="function">
    <text evidence="1">Component of the nexin-dynein regulatory complex (N-DRC), a key regulator of ciliary/flagellar motility which maintains the alignment and integrity of the distal axoneme and regulates microtubule sliding in motile axonemes.</text>
</comment>
<comment type="subunit">
    <text evidence="1">Component of the nexin-dynein regulatory complex (N-DRC).</text>
</comment>
<comment type="subcellular location">
    <subcellularLocation>
        <location evidence="1">Cytoplasm</location>
        <location evidence="1">Cytoskeleton</location>
        <location evidence="1">Flagellum axoneme</location>
    </subcellularLocation>
</comment>
<comment type="similarity">
    <text evidence="4">Belongs to the DRC12 family.</text>
</comment>
<feature type="chain" id="PRO_0000342652" description="Dynein regulatory complex protein 12">
    <location>
        <begin position="1"/>
        <end position="202"/>
    </location>
</feature>
<feature type="region of interest" description="Disordered" evidence="3">
    <location>
        <begin position="1"/>
        <end position="29"/>
    </location>
</feature>
<feature type="coiled-coil region" evidence="2">
    <location>
        <begin position="54"/>
        <end position="149"/>
    </location>
</feature>
<feature type="compositionally biased region" description="Basic residues" evidence="3">
    <location>
        <begin position="1"/>
        <end position="20"/>
    </location>
</feature>
<reference key="1">
    <citation type="journal article" date="2004" name="Genome Res.">
        <title>The status, quality, and expansion of the NIH full-length cDNA project: the Mammalian Gene Collection (MGC).</title>
        <authorList>
            <consortium name="The MGC Project Team"/>
        </authorList>
    </citation>
    <scope>NUCLEOTIDE SEQUENCE [LARGE SCALE MRNA]</scope>
    <source>
        <tissue>Ovary</tissue>
    </source>
</reference>
<evidence type="ECO:0000250" key="1">
    <source>
        <dbReference type="UniProtKB" id="Q22RH5"/>
    </source>
</evidence>
<evidence type="ECO:0000255" key="2"/>
<evidence type="ECO:0000256" key="3">
    <source>
        <dbReference type="SAM" id="MobiDB-lite"/>
    </source>
</evidence>
<evidence type="ECO:0000305" key="4"/>
<sequence>MPPKTKGKGRKAATRKKKKNSSPGVEAEAKHRLVLLEKELLQDHLALQREEACRAKASEDRLKQRLQGLEAELERTQSEGRAVYAEMSRQRQALQKELGTRSKRLEEEVRGLRERLETCQREAKTAREEAERALREQDGTLTELRAHVAHMEAKYEEILHDNLNCLLAKLRAVKPQWDAATLRLHTRHKEQLRRFGLNPLDL</sequence>
<proteinExistence type="evidence at transcript level"/>
<name>DRC12_RAT</name>
<accession>Q5FVL4</accession>
<gene>
    <name type="primary">Drc12</name>
    <name type="synonym">Ccdc153</name>
</gene>
<protein>
    <recommendedName>
        <fullName>Dynein regulatory complex protein 12</fullName>
    </recommendedName>
</protein>
<organism>
    <name type="scientific">Rattus norvegicus</name>
    <name type="common">Rat</name>
    <dbReference type="NCBI Taxonomy" id="10116"/>
    <lineage>
        <taxon>Eukaryota</taxon>
        <taxon>Metazoa</taxon>
        <taxon>Chordata</taxon>
        <taxon>Craniata</taxon>
        <taxon>Vertebrata</taxon>
        <taxon>Euteleostomi</taxon>
        <taxon>Mammalia</taxon>
        <taxon>Eutheria</taxon>
        <taxon>Euarchontoglires</taxon>
        <taxon>Glires</taxon>
        <taxon>Rodentia</taxon>
        <taxon>Myomorpha</taxon>
        <taxon>Muroidea</taxon>
        <taxon>Muridae</taxon>
        <taxon>Murinae</taxon>
        <taxon>Rattus</taxon>
    </lineage>
</organism>
<dbReference type="EMBL" id="BC089910">
    <property type="protein sequence ID" value="AAH89910.1"/>
    <property type="molecule type" value="mRNA"/>
</dbReference>
<dbReference type="RefSeq" id="NP_001013975.1">
    <property type="nucleotide sequence ID" value="NM_001013953.1"/>
</dbReference>
<dbReference type="RefSeq" id="XP_006242975.1">
    <property type="nucleotide sequence ID" value="XM_006242913.5"/>
</dbReference>
<dbReference type="RefSeq" id="XP_063121174.1">
    <property type="nucleotide sequence ID" value="XM_063265104.1"/>
</dbReference>
<dbReference type="SMR" id="Q5FVL4"/>
<dbReference type="FunCoup" id="Q5FVL4">
    <property type="interactions" value="30"/>
</dbReference>
<dbReference type="STRING" id="10116.ENSRNOP00000056528"/>
<dbReference type="PhosphoSitePlus" id="Q5FVL4"/>
<dbReference type="PaxDb" id="10116-ENSRNOP00000056528"/>
<dbReference type="Ensembl" id="ENSRNOT00000059776.3">
    <property type="protein sequence ID" value="ENSRNOP00000056528.2"/>
    <property type="gene ID" value="ENSRNOG00000039086.4"/>
</dbReference>
<dbReference type="GeneID" id="300663"/>
<dbReference type="KEGG" id="rno:300663"/>
<dbReference type="UCSC" id="RGD:1305351">
    <property type="organism name" value="rat"/>
</dbReference>
<dbReference type="AGR" id="RGD:1305351"/>
<dbReference type="CTD" id="283152"/>
<dbReference type="RGD" id="1305351">
    <property type="gene designation" value="Drc12"/>
</dbReference>
<dbReference type="eggNOG" id="ENOG502S1BN">
    <property type="taxonomic scope" value="Eukaryota"/>
</dbReference>
<dbReference type="GeneTree" id="ENSGT00390000016289"/>
<dbReference type="InParanoid" id="Q5FVL4"/>
<dbReference type="OMA" id="HAKYKEQ"/>
<dbReference type="OrthoDB" id="10264405at2759"/>
<dbReference type="PhylomeDB" id="Q5FVL4"/>
<dbReference type="TreeFam" id="TF343461"/>
<dbReference type="PRO" id="PR:Q5FVL4"/>
<dbReference type="Proteomes" id="UP000002494">
    <property type="component" value="Chromosome 8"/>
</dbReference>
<dbReference type="Bgee" id="ENSRNOG00000039086">
    <property type="expression patterns" value="Expressed in lung and 12 other cell types or tissues"/>
</dbReference>
<dbReference type="GO" id="GO:0005737">
    <property type="term" value="C:cytoplasm"/>
    <property type="evidence" value="ECO:0007669"/>
    <property type="project" value="UniProtKB-KW"/>
</dbReference>
<dbReference type="GO" id="GO:0005856">
    <property type="term" value="C:cytoskeleton"/>
    <property type="evidence" value="ECO:0007669"/>
    <property type="project" value="UniProtKB-KW"/>
</dbReference>
<dbReference type="GO" id="GO:0031514">
    <property type="term" value="C:motile cilium"/>
    <property type="evidence" value="ECO:0007669"/>
    <property type="project" value="UniProtKB-KW"/>
</dbReference>
<dbReference type="InterPro" id="IPR033585">
    <property type="entry name" value="DRC12-like"/>
</dbReference>
<dbReference type="PANTHER" id="PTHR28656">
    <property type="entry name" value="COILED-COIL DOMAIN-CONTAINING PROTEIN 153"/>
    <property type="match status" value="1"/>
</dbReference>
<dbReference type="PANTHER" id="PTHR28656:SF1">
    <property type="entry name" value="COILED-COIL DOMAIN-CONTAINING PROTEIN 153"/>
    <property type="match status" value="1"/>
</dbReference>